<evidence type="ECO:0000250" key="1">
    <source>
        <dbReference type="UniProtKB" id="Q8BVM7"/>
    </source>
</evidence>
<evidence type="ECO:0000250" key="2">
    <source>
        <dbReference type="UniProtKB" id="Q96Q35"/>
    </source>
</evidence>
<evidence type="ECO:0000255" key="3"/>
<evidence type="ECO:0000256" key="4">
    <source>
        <dbReference type="SAM" id="MobiDB-lite"/>
    </source>
</evidence>
<evidence type="ECO:0000312" key="5">
    <source>
        <dbReference type="RGD" id="1359362"/>
    </source>
</evidence>
<proteinExistence type="evidence at transcript level"/>
<protein>
    <recommendedName>
        <fullName evidence="2">Flagellum-associated coiled-coil domain-containing protein 1</fullName>
    </recommendedName>
    <alternativeName>
        <fullName>Amyotrophic lateral sclerosis 2 chromosomal region candidate gene 12 protein homolog</fullName>
    </alternativeName>
</protein>
<sequence>MYPNPLIYCTCWDPWNLGPRKLIKTPHPLPKASIRKPIFPAPISREPNYLLSQPAKSTAFPRDKAQSRKLEESNKAPSEVIEVSPGYKLVRNREQISVTLGDEMFSRKKHLESGILSKVKISRSDIISDLEEQISELSAIIEQMNRDHQSAQKLLSNEMDLRCADMKQKFETESRELKQTHKEQLEKLENSYKETLKVEKAAAQEKLDEMGKEYKYLKNMFHMYQDSIYDEMEDKWSRRKAEWEKDEKMEREKILLQQKHRITKKFELESEEEKRKMNESFSTVMENFTREKEELIRQHNEDILQMQELRKAKEILEAELRTQAVVLETLNTSLYHCQIELQREKTMAGNLEKLFQTKLAEAEEKYKSTIQVLTEENNSLRQKVLTISTNEEIFEERSEKSSSASPNIYES</sequence>
<keyword id="KW-0007">Acetylation</keyword>
<keyword id="KW-0966">Cell projection</keyword>
<keyword id="KW-0969">Cilium</keyword>
<keyword id="KW-0175">Coiled coil</keyword>
<keyword id="KW-0963">Cytoplasm</keyword>
<keyword id="KW-0282">Flagellum</keyword>
<keyword id="KW-1185">Reference proteome</keyword>
<organism>
    <name type="scientific">Rattus norvegicus</name>
    <name type="common">Rat</name>
    <dbReference type="NCBI Taxonomy" id="10116"/>
    <lineage>
        <taxon>Eukaryota</taxon>
        <taxon>Metazoa</taxon>
        <taxon>Chordata</taxon>
        <taxon>Craniata</taxon>
        <taxon>Vertebrata</taxon>
        <taxon>Euteleostomi</taxon>
        <taxon>Mammalia</taxon>
        <taxon>Eutheria</taxon>
        <taxon>Euarchontoglires</taxon>
        <taxon>Glires</taxon>
        <taxon>Rodentia</taxon>
        <taxon>Myomorpha</taxon>
        <taxon>Muroidea</taxon>
        <taxon>Muridae</taxon>
        <taxon>Murinae</taxon>
        <taxon>Rattus</taxon>
    </lineage>
</organism>
<name>FACC1_RAT</name>
<comment type="subcellular location">
    <subcellularLocation>
        <location evidence="1">Cytoplasm</location>
    </subcellularLocation>
    <subcellularLocation>
        <location evidence="1">Cytoplasmic granule</location>
    </subcellularLocation>
    <subcellularLocation>
        <location evidence="1">Cell projection</location>
        <location evidence="1">Cilium</location>
        <location evidence="1">Flagellum</location>
    </subcellularLocation>
    <text evidence="1">Expressed in the principal piece of the sperm tail, nearest the sperm head.</text>
</comment>
<dbReference type="EMBL" id="BC079241">
    <property type="protein sequence ID" value="AAH79241.1"/>
    <property type="molecule type" value="mRNA"/>
</dbReference>
<dbReference type="RefSeq" id="NP_001014123.1">
    <property type="nucleotide sequence ID" value="NM_001014101.1"/>
</dbReference>
<dbReference type="SMR" id="Q6AY08"/>
<dbReference type="FunCoup" id="Q6AY08">
    <property type="interactions" value="9"/>
</dbReference>
<dbReference type="STRING" id="10116.ENSRNOP00000034322"/>
<dbReference type="iPTMnet" id="Q6AY08"/>
<dbReference type="PhosphoSitePlus" id="Q6AY08"/>
<dbReference type="PaxDb" id="10116-ENSRNOP00000034322"/>
<dbReference type="Ensembl" id="ENSRNOT00000038431.4">
    <property type="protein sequence ID" value="ENSRNOP00000034322.3"/>
    <property type="gene ID" value="ENSRNOG00000024917.4"/>
</dbReference>
<dbReference type="GeneID" id="316413"/>
<dbReference type="KEGG" id="rno:316413"/>
<dbReference type="UCSC" id="RGD:1359362">
    <property type="organism name" value="rat"/>
</dbReference>
<dbReference type="AGR" id="RGD:1359362"/>
<dbReference type="CTD" id="130540"/>
<dbReference type="RGD" id="1359362">
    <property type="gene designation" value="Flacc1"/>
</dbReference>
<dbReference type="eggNOG" id="ENOG502R2KT">
    <property type="taxonomic scope" value="Eukaryota"/>
</dbReference>
<dbReference type="GeneTree" id="ENSGT00400000022323"/>
<dbReference type="HOGENOM" id="CLU_049696_0_0_1"/>
<dbReference type="InParanoid" id="Q6AY08"/>
<dbReference type="OMA" id="MEKEYKY"/>
<dbReference type="OrthoDB" id="10013155at2759"/>
<dbReference type="PhylomeDB" id="Q6AY08"/>
<dbReference type="TreeFam" id="TF338239"/>
<dbReference type="PRO" id="PR:Q6AY08"/>
<dbReference type="Proteomes" id="UP000002494">
    <property type="component" value="Chromosome 9"/>
</dbReference>
<dbReference type="Bgee" id="ENSRNOG00000024917">
    <property type="expression patterns" value="Expressed in testis and 13 other cell types or tissues"/>
</dbReference>
<dbReference type="GO" id="GO:0005737">
    <property type="term" value="C:cytoplasm"/>
    <property type="evidence" value="ECO:0000250"/>
    <property type="project" value="UniProtKB"/>
</dbReference>
<dbReference type="GO" id="GO:0031410">
    <property type="term" value="C:cytoplasmic vesicle"/>
    <property type="evidence" value="ECO:0000250"/>
    <property type="project" value="UniProtKB"/>
</dbReference>
<dbReference type="GO" id="GO:0001520">
    <property type="term" value="C:outer dense fiber"/>
    <property type="evidence" value="ECO:0000250"/>
    <property type="project" value="UniProtKB"/>
</dbReference>
<dbReference type="GO" id="GO:0036126">
    <property type="term" value="C:sperm flagellum"/>
    <property type="evidence" value="ECO:0000250"/>
    <property type="project" value="UniProtKB"/>
</dbReference>
<dbReference type="InterPro" id="IPR026674">
    <property type="entry name" value="FLACC1"/>
</dbReference>
<dbReference type="PANTHER" id="PTHR21707">
    <property type="entry name" value="FLAGELLUM-ASSOCIATED COILED-COIL DOMAIN-CONTAINING PROTEIN 1"/>
    <property type="match status" value="1"/>
</dbReference>
<dbReference type="PANTHER" id="PTHR21707:SF42">
    <property type="entry name" value="FLAGELLUM-ASSOCIATED COILED-COIL DOMAIN-CONTAINING PROTEIN 1"/>
    <property type="match status" value="1"/>
</dbReference>
<accession>Q6AY08</accession>
<feature type="chain" id="PRO_0000064541" description="Flagellum-associated coiled-coil domain-containing protein 1">
    <location>
        <begin position="1"/>
        <end position="411"/>
    </location>
</feature>
<feature type="region of interest" description="Disordered" evidence="4">
    <location>
        <begin position="52"/>
        <end position="77"/>
    </location>
</feature>
<feature type="coiled-coil region" evidence="3">
    <location>
        <begin position="124"/>
        <end position="220"/>
    </location>
</feature>
<feature type="coiled-coil region" evidence="3">
    <location>
        <begin position="278"/>
        <end position="328"/>
    </location>
</feature>
<feature type="coiled-coil region" evidence="3">
    <location>
        <begin position="355"/>
        <end position="385"/>
    </location>
</feature>
<feature type="compositionally biased region" description="Basic and acidic residues" evidence="4">
    <location>
        <begin position="61"/>
        <end position="74"/>
    </location>
</feature>
<feature type="modified residue" description="N6-acetyllysine" evidence="2">
    <location>
        <position position="353"/>
    </location>
</feature>
<reference key="1">
    <citation type="journal article" date="2004" name="Genome Res.">
        <title>The status, quality, and expansion of the NIH full-length cDNA project: the Mammalian Gene Collection (MGC).</title>
        <authorList>
            <consortium name="The MGC Project Team"/>
        </authorList>
    </citation>
    <scope>NUCLEOTIDE SEQUENCE [LARGE SCALE MRNA]</scope>
    <source>
        <tissue>Testis</tissue>
    </source>
</reference>
<gene>
    <name evidence="2" type="primary">Flacc1</name>
    <name evidence="5" type="synonym">Als2cr12</name>
</gene>